<accession>Q2NIJ6</accession>
<proteinExistence type="inferred from homology"/>
<dbReference type="EC" id="1.14.-.-" evidence="1"/>
<dbReference type="EMBL" id="CP000061">
    <property type="protein sequence ID" value="ABC65747.1"/>
    <property type="status" value="ALT_INIT"/>
    <property type="molecule type" value="Genomic_DNA"/>
</dbReference>
<dbReference type="RefSeq" id="WP_041639925.1">
    <property type="nucleotide sequence ID" value="NC_007716.1"/>
</dbReference>
<dbReference type="SMR" id="Q2NIJ6"/>
<dbReference type="STRING" id="322098.AYWB_630"/>
<dbReference type="KEGG" id="ayw:AYWB_630"/>
<dbReference type="eggNOG" id="COG1054">
    <property type="taxonomic scope" value="Bacteria"/>
</dbReference>
<dbReference type="HOGENOM" id="CLU_038878_1_0_14"/>
<dbReference type="OrthoDB" id="9778326at2"/>
<dbReference type="Proteomes" id="UP000001934">
    <property type="component" value="Chromosome"/>
</dbReference>
<dbReference type="GO" id="GO:0016705">
    <property type="term" value="F:oxidoreductase activity, acting on paired donors, with incorporation or reduction of molecular oxygen"/>
    <property type="evidence" value="ECO:0007669"/>
    <property type="project" value="UniProtKB-UniRule"/>
</dbReference>
<dbReference type="GO" id="GO:0006400">
    <property type="term" value="P:tRNA modification"/>
    <property type="evidence" value="ECO:0007669"/>
    <property type="project" value="UniProtKB-UniRule"/>
</dbReference>
<dbReference type="CDD" id="cd01518">
    <property type="entry name" value="RHOD_YceA"/>
    <property type="match status" value="1"/>
</dbReference>
<dbReference type="Gene3D" id="3.30.70.100">
    <property type="match status" value="1"/>
</dbReference>
<dbReference type="Gene3D" id="3.40.250.10">
    <property type="entry name" value="Rhodanese-like domain"/>
    <property type="match status" value="1"/>
</dbReference>
<dbReference type="HAMAP" id="MF_00469">
    <property type="entry name" value="TrhO"/>
    <property type="match status" value="1"/>
</dbReference>
<dbReference type="InterPro" id="IPR001763">
    <property type="entry name" value="Rhodanese-like_dom"/>
</dbReference>
<dbReference type="InterPro" id="IPR036873">
    <property type="entry name" value="Rhodanese-like_dom_sf"/>
</dbReference>
<dbReference type="InterPro" id="IPR022111">
    <property type="entry name" value="Rhodanese_C"/>
</dbReference>
<dbReference type="InterPro" id="IPR020936">
    <property type="entry name" value="TrhO"/>
</dbReference>
<dbReference type="InterPro" id="IPR040503">
    <property type="entry name" value="TRHO_N"/>
</dbReference>
<dbReference type="NCBIfam" id="NF001135">
    <property type="entry name" value="PRK00142.1-3"/>
    <property type="match status" value="1"/>
</dbReference>
<dbReference type="PANTHER" id="PTHR43268:SF3">
    <property type="entry name" value="RHODANESE-LIKE DOMAIN-CONTAINING PROTEIN 7-RELATED"/>
    <property type="match status" value="1"/>
</dbReference>
<dbReference type="PANTHER" id="PTHR43268">
    <property type="entry name" value="THIOSULFATE SULFURTRANSFERASE/RHODANESE-LIKE DOMAIN-CONTAINING PROTEIN 2"/>
    <property type="match status" value="1"/>
</dbReference>
<dbReference type="Pfam" id="PF00581">
    <property type="entry name" value="Rhodanese"/>
    <property type="match status" value="1"/>
</dbReference>
<dbReference type="Pfam" id="PF12368">
    <property type="entry name" value="Rhodanese_C"/>
    <property type="match status" value="1"/>
</dbReference>
<dbReference type="Pfam" id="PF17773">
    <property type="entry name" value="UPF0176_N"/>
    <property type="match status" value="1"/>
</dbReference>
<dbReference type="SMART" id="SM00450">
    <property type="entry name" value="RHOD"/>
    <property type="match status" value="1"/>
</dbReference>
<dbReference type="SUPFAM" id="SSF52821">
    <property type="entry name" value="Rhodanese/Cell cycle control phosphatase"/>
    <property type="match status" value="1"/>
</dbReference>
<dbReference type="PROSITE" id="PS50206">
    <property type="entry name" value="RHODANESE_3"/>
    <property type="match status" value="1"/>
</dbReference>
<evidence type="ECO:0000255" key="1">
    <source>
        <dbReference type="HAMAP-Rule" id="MF_00469"/>
    </source>
</evidence>
<evidence type="ECO:0000305" key="2"/>
<protein>
    <recommendedName>
        <fullName evidence="1">tRNA uridine(34) hydroxylase</fullName>
        <ecNumber evidence="1">1.14.-.-</ecNumber>
    </recommendedName>
    <alternativeName>
        <fullName evidence="1">tRNA hydroxylation protein O</fullName>
    </alternativeName>
</protein>
<comment type="function">
    <text evidence="1">Catalyzes oxygen-dependent 5-hydroxyuridine (ho5U) modification at position 34 in tRNAs.</text>
</comment>
<comment type="catalytic activity">
    <reaction evidence="1">
        <text>uridine(34) in tRNA + AH2 + O2 = 5-hydroxyuridine(34) in tRNA + A + H2O</text>
        <dbReference type="Rhea" id="RHEA:64224"/>
        <dbReference type="Rhea" id="RHEA-COMP:11727"/>
        <dbReference type="Rhea" id="RHEA-COMP:13381"/>
        <dbReference type="ChEBI" id="CHEBI:13193"/>
        <dbReference type="ChEBI" id="CHEBI:15377"/>
        <dbReference type="ChEBI" id="CHEBI:15379"/>
        <dbReference type="ChEBI" id="CHEBI:17499"/>
        <dbReference type="ChEBI" id="CHEBI:65315"/>
        <dbReference type="ChEBI" id="CHEBI:136877"/>
    </reaction>
</comment>
<comment type="similarity">
    <text evidence="1">Belongs to the TrhO family.</text>
</comment>
<comment type="sequence caution" evidence="2">
    <conflict type="erroneous initiation">
        <sequence resource="EMBL-CDS" id="ABC65747"/>
    </conflict>
</comment>
<keyword id="KW-0560">Oxidoreductase</keyword>
<keyword id="KW-0819">tRNA processing</keyword>
<feature type="chain" id="PRO_0000242910" description="tRNA uridine(34) hydroxylase">
    <location>
        <begin position="1"/>
        <end position="308"/>
    </location>
</feature>
<feature type="domain" description="Rhodanese" evidence="1">
    <location>
        <begin position="129"/>
        <end position="223"/>
    </location>
</feature>
<feature type="active site" description="Cysteine persulfide intermediate" evidence="1">
    <location>
        <position position="183"/>
    </location>
</feature>
<reference key="1">
    <citation type="journal article" date="2006" name="J. Bacteriol.">
        <title>Living with genome instability: the adaptation of phytoplasmas to diverse environments of their insect and plant hosts.</title>
        <authorList>
            <person name="Bai X."/>
            <person name="Zhang J."/>
            <person name="Ewing A."/>
            <person name="Miller S.A."/>
            <person name="Jancso Radek A."/>
            <person name="Shevchenko D.V."/>
            <person name="Tsukerman K."/>
            <person name="Walunas T."/>
            <person name="Lapidus A."/>
            <person name="Campbell J.W."/>
            <person name="Hogenhout S.A."/>
        </authorList>
    </citation>
    <scope>NUCLEOTIDE SEQUENCE [LARGE SCALE GENOMIC DNA]</scope>
    <source>
        <strain>AYWB</strain>
    </source>
</reference>
<gene>
    <name evidence="1" type="primary">trhO</name>
    <name type="ordered locus">AYWB_630</name>
</gene>
<name>TRHO_AYWBP</name>
<organism>
    <name type="scientific">Aster yellows witches'-broom phytoplasma (strain AYWB)</name>
    <dbReference type="NCBI Taxonomy" id="322098"/>
    <lineage>
        <taxon>Bacteria</taxon>
        <taxon>Bacillati</taxon>
        <taxon>Mycoplasmatota</taxon>
        <taxon>Mollicutes</taxon>
        <taxon>Acholeplasmatales</taxon>
        <taxon>Acholeplasmataceae</taxon>
        <taxon>Candidatus Phytoplasma</taxon>
        <taxon>16SrI (Aster yellows group)</taxon>
    </lineage>
</organism>
<sequence length="308" mass="35671">MTKTSNSSYLVILYYQYVPIKDPQTFRNQHFKYCESLGLLGRIIVAQEGINGTLSGPKEQIHKYIDQLKQDVRFCNTVFKIENVDAQVFPRLSIKVKPELVNLSLEEKVDLTKDKGAYLAPQEFLQALQEKDVLILDARNDYEYDLGHFRNAVNPNIRHFRDLPNWVKQNTHLLKNKKIVTYCTGGVRCEKFSTFLKKEGFVDVYQLEGGIISYGKHPETQGVLWDGQMYVFDQRIAVTVNQKEHVIVGKDYFDGTPCERYINCSNPQCNKQILCHEHNEHKYLGACSDKCSAHPQNRYLKKHNNKTS</sequence>